<proteinExistence type="inferred from homology"/>
<comment type="catalytic activity">
    <reaction evidence="1">
        <text>urea + 2 H2O + H(+) = hydrogencarbonate + 2 NH4(+)</text>
        <dbReference type="Rhea" id="RHEA:20557"/>
        <dbReference type="ChEBI" id="CHEBI:15377"/>
        <dbReference type="ChEBI" id="CHEBI:15378"/>
        <dbReference type="ChEBI" id="CHEBI:16199"/>
        <dbReference type="ChEBI" id="CHEBI:17544"/>
        <dbReference type="ChEBI" id="CHEBI:28938"/>
        <dbReference type="EC" id="3.5.1.5"/>
    </reaction>
</comment>
<comment type="cofactor">
    <cofactor evidence="1">
        <name>Ni cation</name>
        <dbReference type="ChEBI" id="CHEBI:25516"/>
    </cofactor>
    <text evidence="1">Binds 2 nickel ions per subunit.</text>
</comment>
<comment type="pathway">
    <text evidence="1">Nitrogen metabolism; urea degradation; CO(2) and NH(3) from urea (urease route): step 1/1.</text>
</comment>
<comment type="subunit">
    <text evidence="1">Heterotrimer of UreA (gamma), UreB (beta) and UreC (alpha) subunits. Three heterotrimers associate to form the active enzyme.</text>
</comment>
<comment type="subcellular location">
    <subcellularLocation>
        <location evidence="1">Cytoplasm</location>
    </subcellularLocation>
</comment>
<comment type="PTM">
    <text evidence="1">Carboxylation allows a single lysine to coordinate two nickel ions.</text>
</comment>
<comment type="similarity">
    <text evidence="1">Belongs to the metallo-dependent hydrolases superfamily. Urease alpha subunit family.</text>
</comment>
<organism>
    <name type="scientific">Synechococcus sp. (strain CC9311)</name>
    <dbReference type="NCBI Taxonomy" id="64471"/>
    <lineage>
        <taxon>Bacteria</taxon>
        <taxon>Bacillati</taxon>
        <taxon>Cyanobacteriota</taxon>
        <taxon>Cyanophyceae</taxon>
        <taxon>Synechococcales</taxon>
        <taxon>Synechococcaceae</taxon>
        <taxon>Synechococcus</taxon>
    </lineage>
</organism>
<name>URE1_SYNS3</name>
<sequence length="569" mass="60429">MPYRISRQAYAETYGPTTGDRIRLADTELILEVEKDFTTYGDEVKFGGGKVIRDGMGQSQTSRAGGAVDTVITNALILDWWGIVKADIGLKDGRIVGIGKAGNPDIQEGVTIVIGPGTEAIAGEGHILTAGGIDTHIHFICPQQIETALASGVTTLMGGGTGPATGTNATTCTPGAFHIGRMLQAAEGLPVNLGFFGKGNASTPEALEEQVRAGACGLKLHEDWGTTPAAIDACLSVADQMDVQVCIHTDTLNEAGFVEDTIAAIKGRTIHTFHTEGAGGGHAPDIIKICGEANVLPSSTNPTRPYTRNTLEEHLDMLMVCHHLDPKIPEDVAFAESRIRRETIAAEDILHDLGAFSIIASDSQAMGRVGEVITRTFQTAHKMKVQRGALPEDSSRNDNHRLKRYIAKVTINPAIAHGISSQVGSVETGKLADLVLWKPGFFGIRPQLVVKGGSIVWAQMGDANASIPTPGPVHGRPMFAAFGKALAPSCLTFMSDAAMNDNIQSKLGLKRTCIAVENTREVGKSALKLNSALPNMSVDPQTYEVFADGELLTCEPAEVLPLAQRYLLL</sequence>
<gene>
    <name evidence="1" type="primary">ureC</name>
    <name type="ordered locus">sync_2879</name>
</gene>
<dbReference type="EC" id="3.5.1.5" evidence="1"/>
<dbReference type="EMBL" id="CP000435">
    <property type="protein sequence ID" value="ABI47185.1"/>
    <property type="molecule type" value="Genomic_DNA"/>
</dbReference>
<dbReference type="RefSeq" id="WP_011620766.1">
    <property type="nucleotide sequence ID" value="NC_008319.1"/>
</dbReference>
<dbReference type="SMR" id="Q0I656"/>
<dbReference type="STRING" id="64471.sync_2879"/>
<dbReference type="KEGG" id="syg:sync_2879"/>
<dbReference type="eggNOG" id="COG0804">
    <property type="taxonomic scope" value="Bacteria"/>
</dbReference>
<dbReference type="HOGENOM" id="CLU_000980_0_0_3"/>
<dbReference type="OrthoDB" id="9802793at2"/>
<dbReference type="UniPathway" id="UPA00258">
    <property type="reaction ID" value="UER00370"/>
</dbReference>
<dbReference type="Proteomes" id="UP000001961">
    <property type="component" value="Chromosome"/>
</dbReference>
<dbReference type="GO" id="GO:0005737">
    <property type="term" value="C:cytoplasm"/>
    <property type="evidence" value="ECO:0007669"/>
    <property type="project" value="UniProtKB-SubCell"/>
</dbReference>
<dbReference type="GO" id="GO:0016151">
    <property type="term" value="F:nickel cation binding"/>
    <property type="evidence" value="ECO:0007669"/>
    <property type="project" value="UniProtKB-UniRule"/>
</dbReference>
<dbReference type="GO" id="GO:0009039">
    <property type="term" value="F:urease activity"/>
    <property type="evidence" value="ECO:0007669"/>
    <property type="project" value="UniProtKB-UniRule"/>
</dbReference>
<dbReference type="GO" id="GO:0043419">
    <property type="term" value="P:urea catabolic process"/>
    <property type="evidence" value="ECO:0007669"/>
    <property type="project" value="UniProtKB-UniRule"/>
</dbReference>
<dbReference type="CDD" id="cd00375">
    <property type="entry name" value="Urease_alpha"/>
    <property type="match status" value="1"/>
</dbReference>
<dbReference type="Gene3D" id="3.20.20.140">
    <property type="entry name" value="Metal-dependent hydrolases"/>
    <property type="match status" value="1"/>
</dbReference>
<dbReference type="Gene3D" id="2.30.40.10">
    <property type="entry name" value="Urease, subunit C, domain 1"/>
    <property type="match status" value="1"/>
</dbReference>
<dbReference type="HAMAP" id="MF_01953">
    <property type="entry name" value="Urease_alpha"/>
    <property type="match status" value="1"/>
</dbReference>
<dbReference type="InterPro" id="IPR006680">
    <property type="entry name" value="Amidohydro-rel"/>
</dbReference>
<dbReference type="InterPro" id="IPR011059">
    <property type="entry name" value="Metal-dep_hydrolase_composite"/>
</dbReference>
<dbReference type="InterPro" id="IPR032466">
    <property type="entry name" value="Metal_Hydrolase"/>
</dbReference>
<dbReference type="InterPro" id="IPR011612">
    <property type="entry name" value="Urease_alpha_N_dom"/>
</dbReference>
<dbReference type="InterPro" id="IPR050112">
    <property type="entry name" value="Urease_alpha_subunit"/>
</dbReference>
<dbReference type="InterPro" id="IPR017950">
    <property type="entry name" value="Urease_AS"/>
</dbReference>
<dbReference type="InterPro" id="IPR005848">
    <property type="entry name" value="Urease_asu"/>
</dbReference>
<dbReference type="InterPro" id="IPR017951">
    <property type="entry name" value="Urease_asu_c"/>
</dbReference>
<dbReference type="InterPro" id="IPR029754">
    <property type="entry name" value="Urease_Ni-bd"/>
</dbReference>
<dbReference type="NCBIfam" id="NF009685">
    <property type="entry name" value="PRK13206.1"/>
    <property type="match status" value="1"/>
</dbReference>
<dbReference type="NCBIfam" id="NF009686">
    <property type="entry name" value="PRK13207.1"/>
    <property type="match status" value="1"/>
</dbReference>
<dbReference type="NCBIfam" id="TIGR01792">
    <property type="entry name" value="urease_alph"/>
    <property type="match status" value="1"/>
</dbReference>
<dbReference type="PANTHER" id="PTHR43440">
    <property type="entry name" value="UREASE"/>
    <property type="match status" value="1"/>
</dbReference>
<dbReference type="PANTHER" id="PTHR43440:SF1">
    <property type="entry name" value="UREASE"/>
    <property type="match status" value="1"/>
</dbReference>
<dbReference type="Pfam" id="PF01979">
    <property type="entry name" value="Amidohydro_1"/>
    <property type="match status" value="1"/>
</dbReference>
<dbReference type="Pfam" id="PF00449">
    <property type="entry name" value="Urease_alpha"/>
    <property type="match status" value="1"/>
</dbReference>
<dbReference type="PRINTS" id="PR01752">
    <property type="entry name" value="UREASE"/>
</dbReference>
<dbReference type="SUPFAM" id="SSF51338">
    <property type="entry name" value="Composite domain of metallo-dependent hydrolases"/>
    <property type="match status" value="2"/>
</dbReference>
<dbReference type="SUPFAM" id="SSF51556">
    <property type="entry name" value="Metallo-dependent hydrolases"/>
    <property type="match status" value="1"/>
</dbReference>
<dbReference type="PROSITE" id="PS01120">
    <property type="entry name" value="UREASE_1"/>
    <property type="match status" value="1"/>
</dbReference>
<dbReference type="PROSITE" id="PS00145">
    <property type="entry name" value="UREASE_2"/>
    <property type="match status" value="1"/>
</dbReference>
<dbReference type="PROSITE" id="PS51368">
    <property type="entry name" value="UREASE_3"/>
    <property type="match status" value="1"/>
</dbReference>
<evidence type="ECO:0000255" key="1">
    <source>
        <dbReference type="HAMAP-Rule" id="MF_01953"/>
    </source>
</evidence>
<feature type="chain" id="PRO_1000070701" description="Urease subunit alpha">
    <location>
        <begin position="1"/>
        <end position="569"/>
    </location>
</feature>
<feature type="domain" description="Urease" evidence="1">
    <location>
        <begin position="131"/>
        <end position="569"/>
    </location>
</feature>
<feature type="active site" description="Proton donor" evidence="1">
    <location>
        <position position="322"/>
    </location>
</feature>
<feature type="binding site" evidence="1">
    <location>
        <position position="136"/>
    </location>
    <ligand>
        <name>Ni(2+)</name>
        <dbReference type="ChEBI" id="CHEBI:49786"/>
        <label>1</label>
    </ligand>
</feature>
<feature type="binding site" evidence="1">
    <location>
        <position position="138"/>
    </location>
    <ligand>
        <name>Ni(2+)</name>
        <dbReference type="ChEBI" id="CHEBI:49786"/>
        <label>1</label>
    </ligand>
</feature>
<feature type="binding site" description="via carbamate group" evidence="1">
    <location>
        <position position="219"/>
    </location>
    <ligand>
        <name>Ni(2+)</name>
        <dbReference type="ChEBI" id="CHEBI:49786"/>
        <label>1</label>
    </ligand>
</feature>
<feature type="binding site" description="via carbamate group" evidence="1">
    <location>
        <position position="219"/>
    </location>
    <ligand>
        <name>Ni(2+)</name>
        <dbReference type="ChEBI" id="CHEBI:49786"/>
        <label>2</label>
    </ligand>
</feature>
<feature type="binding site" evidence="1">
    <location>
        <position position="221"/>
    </location>
    <ligand>
        <name>substrate</name>
    </ligand>
</feature>
<feature type="binding site" evidence="1">
    <location>
        <position position="248"/>
    </location>
    <ligand>
        <name>Ni(2+)</name>
        <dbReference type="ChEBI" id="CHEBI:49786"/>
        <label>2</label>
    </ligand>
</feature>
<feature type="binding site" evidence="1">
    <location>
        <position position="274"/>
    </location>
    <ligand>
        <name>Ni(2+)</name>
        <dbReference type="ChEBI" id="CHEBI:49786"/>
        <label>2</label>
    </ligand>
</feature>
<feature type="binding site" evidence="1">
    <location>
        <position position="362"/>
    </location>
    <ligand>
        <name>Ni(2+)</name>
        <dbReference type="ChEBI" id="CHEBI:49786"/>
        <label>1</label>
    </ligand>
</feature>
<feature type="modified residue" description="N6-carboxylysine" evidence="1">
    <location>
        <position position="219"/>
    </location>
</feature>
<reference key="1">
    <citation type="journal article" date="2006" name="Proc. Natl. Acad. Sci. U.S.A.">
        <title>Genome sequence of Synechococcus CC9311: insights into adaptation to a coastal environment.</title>
        <authorList>
            <person name="Palenik B."/>
            <person name="Ren Q."/>
            <person name="Dupont C.L."/>
            <person name="Myers G.S."/>
            <person name="Heidelberg J.F."/>
            <person name="Badger J.H."/>
            <person name="Madupu R."/>
            <person name="Nelson W.C."/>
            <person name="Brinkac L.M."/>
            <person name="Dodson R.J."/>
            <person name="Durkin A.S."/>
            <person name="Daugherty S.C."/>
            <person name="Sullivan S.A."/>
            <person name="Khouri H."/>
            <person name="Mohamoud Y."/>
            <person name="Halpin R."/>
            <person name="Paulsen I.T."/>
        </authorList>
    </citation>
    <scope>NUCLEOTIDE SEQUENCE [LARGE SCALE GENOMIC DNA]</scope>
    <source>
        <strain>CC9311</strain>
    </source>
</reference>
<keyword id="KW-0963">Cytoplasm</keyword>
<keyword id="KW-0378">Hydrolase</keyword>
<keyword id="KW-0479">Metal-binding</keyword>
<keyword id="KW-0533">Nickel</keyword>
<keyword id="KW-1185">Reference proteome</keyword>
<protein>
    <recommendedName>
        <fullName evidence="1">Urease subunit alpha</fullName>
        <ecNumber evidence="1">3.5.1.5</ecNumber>
    </recommendedName>
    <alternativeName>
        <fullName evidence="1">Urea amidohydrolase subunit alpha</fullName>
    </alternativeName>
</protein>
<accession>Q0I656</accession>